<sequence>MIKLVLLRHGESQWNRENRFTGWYDIGLSEKGETESRAAGELLKKEGFTFDVAFTSVLKRAIGTLWNVLEGMDLMWIPVFKNWRLNERHYGALQGMNKAETAQQHGDEQVLVWRRSYDTPPPPLEKNDPRFPGNDPRYATLAPEEVPVTECLKDTVDRFLPLWNDEIAPMIRSGKRVIIAAHGNSLRALVKYLDNISEEDIVGLNIPTGVPLVYELDDDLKPLKSYYLGDQEELQKAIDSVANQGKA</sequence>
<dbReference type="EC" id="5.4.2.11" evidence="1"/>
<dbReference type="EMBL" id="CP001101">
    <property type="protein sequence ID" value="ACE03629.1"/>
    <property type="molecule type" value="Genomic_DNA"/>
</dbReference>
<dbReference type="SMR" id="B3EN99"/>
<dbReference type="STRING" id="331678.Cphamn1_0671"/>
<dbReference type="KEGG" id="cpb:Cphamn1_0671"/>
<dbReference type="eggNOG" id="COG0588">
    <property type="taxonomic scope" value="Bacteria"/>
</dbReference>
<dbReference type="HOGENOM" id="CLU_033323_1_1_10"/>
<dbReference type="OrthoDB" id="9782128at2"/>
<dbReference type="UniPathway" id="UPA00109">
    <property type="reaction ID" value="UER00186"/>
</dbReference>
<dbReference type="GO" id="GO:0004619">
    <property type="term" value="F:phosphoglycerate mutase activity"/>
    <property type="evidence" value="ECO:0007669"/>
    <property type="project" value="UniProtKB-EC"/>
</dbReference>
<dbReference type="GO" id="GO:0006094">
    <property type="term" value="P:gluconeogenesis"/>
    <property type="evidence" value="ECO:0007669"/>
    <property type="project" value="UniProtKB-UniRule"/>
</dbReference>
<dbReference type="GO" id="GO:0006096">
    <property type="term" value="P:glycolytic process"/>
    <property type="evidence" value="ECO:0007669"/>
    <property type="project" value="UniProtKB-UniRule"/>
</dbReference>
<dbReference type="CDD" id="cd07067">
    <property type="entry name" value="HP_PGM_like"/>
    <property type="match status" value="1"/>
</dbReference>
<dbReference type="FunFam" id="3.40.50.1240:FF:000003">
    <property type="entry name" value="2,3-bisphosphoglycerate-dependent phosphoglycerate mutase"/>
    <property type="match status" value="1"/>
</dbReference>
<dbReference type="Gene3D" id="3.40.50.1240">
    <property type="entry name" value="Phosphoglycerate mutase-like"/>
    <property type="match status" value="1"/>
</dbReference>
<dbReference type="HAMAP" id="MF_01039">
    <property type="entry name" value="PGAM_GpmA"/>
    <property type="match status" value="1"/>
</dbReference>
<dbReference type="InterPro" id="IPR013078">
    <property type="entry name" value="His_Pase_superF_clade-1"/>
</dbReference>
<dbReference type="InterPro" id="IPR029033">
    <property type="entry name" value="His_PPase_superfam"/>
</dbReference>
<dbReference type="InterPro" id="IPR001345">
    <property type="entry name" value="PG/BPGM_mutase_AS"/>
</dbReference>
<dbReference type="InterPro" id="IPR005952">
    <property type="entry name" value="Phosphogly_mut1"/>
</dbReference>
<dbReference type="NCBIfam" id="TIGR01258">
    <property type="entry name" value="pgm_1"/>
    <property type="match status" value="1"/>
</dbReference>
<dbReference type="NCBIfam" id="NF010713">
    <property type="entry name" value="PRK14115.1"/>
    <property type="match status" value="1"/>
</dbReference>
<dbReference type="PANTHER" id="PTHR11931">
    <property type="entry name" value="PHOSPHOGLYCERATE MUTASE"/>
    <property type="match status" value="1"/>
</dbReference>
<dbReference type="Pfam" id="PF00300">
    <property type="entry name" value="His_Phos_1"/>
    <property type="match status" value="1"/>
</dbReference>
<dbReference type="PIRSF" id="PIRSF000709">
    <property type="entry name" value="6PFK_2-Ptase"/>
    <property type="match status" value="1"/>
</dbReference>
<dbReference type="SMART" id="SM00855">
    <property type="entry name" value="PGAM"/>
    <property type="match status" value="1"/>
</dbReference>
<dbReference type="SUPFAM" id="SSF53254">
    <property type="entry name" value="Phosphoglycerate mutase-like"/>
    <property type="match status" value="1"/>
</dbReference>
<dbReference type="PROSITE" id="PS00175">
    <property type="entry name" value="PG_MUTASE"/>
    <property type="match status" value="1"/>
</dbReference>
<reference key="1">
    <citation type="submission" date="2008-06" db="EMBL/GenBank/DDBJ databases">
        <title>Complete sequence of Chlorobium phaeobacteroides BS1.</title>
        <authorList>
            <consortium name="US DOE Joint Genome Institute"/>
            <person name="Lucas S."/>
            <person name="Copeland A."/>
            <person name="Lapidus A."/>
            <person name="Glavina del Rio T."/>
            <person name="Dalin E."/>
            <person name="Tice H."/>
            <person name="Bruce D."/>
            <person name="Goodwin L."/>
            <person name="Pitluck S."/>
            <person name="Schmutz J."/>
            <person name="Larimer F."/>
            <person name="Land M."/>
            <person name="Hauser L."/>
            <person name="Kyrpides N."/>
            <person name="Ovchinnikova G."/>
            <person name="Li T."/>
            <person name="Liu Z."/>
            <person name="Zhao F."/>
            <person name="Overmann J."/>
            <person name="Bryant D.A."/>
            <person name="Richardson P."/>
        </authorList>
    </citation>
    <scope>NUCLEOTIDE SEQUENCE [LARGE SCALE GENOMIC DNA]</scope>
    <source>
        <strain>BS1</strain>
    </source>
</reference>
<organism>
    <name type="scientific">Chlorobium phaeobacteroides (strain BS1)</name>
    <dbReference type="NCBI Taxonomy" id="331678"/>
    <lineage>
        <taxon>Bacteria</taxon>
        <taxon>Pseudomonadati</taxon>
        <taxon>Chlorobiota</taxon>
        <taxon>Chlorobiia</taxon>
        <taxon>Chlorobiales</taxon>
        <taxon>Chlorobiaceae</taxon>
        <taxon>Chlorobium/Pelodictyon group</taxon>
        <taxon>Chlorobium</taxon>
    </lineage>
</organism>
<evidence type="ECO:0000255" key="1">
    <source>
        <dbReference type="HAMAP-Rule" id="MF_01039"/>
    </source>
</evidence>
<keyword id="KW-0312">Gluconeogenesis</keyword>
<keyword id="KW-0324">Glycolysis</keyword>
<keyword id="KW-0413">Isomerase</keyword>
<feature type="chain" id="PRO_1000135934" description="2,3-bisphosphoglycerate-dependent phosphoglycerate mutase">
    <location>
        <begin position="1"/>
        <end position="247"/>
    </location>
</feature>
<feature type="active site" description="Tele-phosphohistidine intermediate" evidence="1">
    <location>
        <position position="9"/>
    </location>
</feature>
<feature type="active site" description="Proton donor/acceptor" evidence="1">
    <location>
        <position position="87"/>
    </location>
</feature>
<feature type="binding site" evidence="1">
    <location>
        <begin position="8"/>
        <end position="15"/>
    </location>
    <ligand>
        <name>substrate</name>
    </ligand>
</feature>
<feature type="binding site" evidence="1">
    <location>
        <begin position="21"/>
        <end position="22"/>
    </location>
    <ligand>
        <name>substrate</name>
    </ligand>
</feature>
<feature type="binding site" evidence="1">
    <location>
        <position position="60"/>
    </location>
    <ligand>
        <name>substrate</name>
    </ligand>
</feature>
<feature type="binding site" evidence="1">
    <location>
        <begin position="87"/>
        <end position="90"/>
    </location>
    <ligand>
        <name>substrate</name>
    </ligand>
</feature>
<feature type="binding site" evidence="1">
    <location>
        <position position="98"/>
    </location>
    <ligand>
        <name>substrate</name>
    </ligand>
</feature>
<feature type="binding site" evidence="1">
    <location>
        <begin position="114"/>
        <end position="115"/>
    </location>
    <ligand>
        <name>substrate</name>
    </ligand>
</feature>
<feature type="binding site" evidence="1">
    <location>
        <begin position="183"/>
        <end position="184"/>
    </location>
    <ligand>
        <name>substrate</name>
    </ligand>
</feature>
<feature type="site" description="Transition state stabilizer" evidence="1">
    <location>
        <position position="182"/>
    </location>
</feature>
<gene>
    <name evidence="1" type="primary">gpmA</name>
    <name type="ordered locus">Cphamn1_0671</name>
</gene>
<accession>B3EN99</accession>
<comment type="function">
    <text evidence="1">Catalyzes the interconversion of 2-phosphoglycerate and 3-phosphoglycerate.</text>
</comment>
<comment type="catalytic activity">
    <reaction evidence="1">
        <text>(2R)-2-phosphoglycerate = (2R)-3-phosphoglycerate</text>
        <dbReference type="Rhea" id="RHEA:15901"/>
        <dbReference type="ChEBI" id="CHEBI:58272"/>
        <dbReference type="ChEBI" id="CHEBI:58289"/>
        <dbReference type="EC" id="5.4.2.11"/>
    </reaction>
</comment>
<comment type="pathway">
    <text evidence="1">Carbohydrate degradation; glycolysis; pyruvate from D-glyceraldehyde 3-phosphate: step 3/5.</text>
</comment>
<comment type="similarity">
    <text evidence="1">Belongs to the phosphoglycerate mutase family. BPG-dependent PGAM subfamily.</text>
</comment>
<proteinExistence type="inferred from homology"/>
<name>GPMA_CHLPB</name>
<protein>
    <recommendedName>
        <fullName evidence="1">2,3-bisphosphoglycerate-dependent phosphoglycerate mutase</fullName>
        <shortName evidence="1">BPG-dependent PGAM</shortName>
        <shortName evidence="1">PGAM</shortName>
        <shortName evidence="1">Phosphoglyceromutase</shortName>
        <shortName evidence="1">dPGM</shortName>
        <ecNumber evidence="1">5.4.2.11</ecNumber>
    </recommendedName>
</protein>